<reference key="1">
    <citation type="journal article" date="2002" name="Proc. Natl. Acad. Sci. U.S.A.">
        <title>Genome sequence of the hyperthermophilic crenarchaeon Pyrobaculum aerophilum.</title>
        <authorList>
            <person name="Fitz-Gibbon S.T."/>
            <person name="Ladner H."/>
            <person name="Kim U.-J."/>
            <person name="Stetter K.O."/>
            <person name="Simon M.I."/>
            <person name="Miller J.H."/>
        </authorList>
    </citation>
    <scope>NUCLEOTIDE SEQUENCE [LARGE SCALE GENOMIC DNA]</scope>
    <source>
        <strain>ATCC 51768 / DSM 7523 / JCM 9630 / CIP 104966 / NBRC 100827 / IM2</strain>
    </source>
</reference>
<dbReference type="EC" id="7.1.2.2" evidence="1"/>
<dbReference type="EMBL" id="AE009441">
    <property type="protein sequence ID" value="AAL62932.1"/>
    <property type="molecule type" value="Genomic_DNA"/>
</dbReference>
<dbReference type="RefSeq" id="WP_011007404.1">
    <property type="nucleotide sequence ID" value="NC_003364.1"/>
</dbReference>
<dbReference type="SMR" id="Q8ZYR1"/>
<dbReference type="FunCoup" id="Q8ZYR1">
    <property type="interactions" value="168"/>
</dbReference>
<dbReference type="STRING" id="178306.PAE0663"/>
<dbReference type="EnsemblBacteria" id="AAL62932">
    <property type="protein sequence ID" value="AAL62932"/>
    <property type="gene ID" value="PAE0663"/>
</dbReference>
<dbReference type="GeneID" id="1465157"/>
<dbReference type="KEGG" id="pai:PAE0663"/>
<dbReference type="PATRIC" id="fig|178306.9.peg.477"/>
<dbReference type="eggNOG" id="arCOG00868">
    <property type="taxonomic scope" value="Archaea"/>
</dbReference>
<dbReference type="HOGENOM" id="CLU_008162_3_1_2"/>
<dbReference type="InParanoid" id="Q8ZYR1"/>
<dbReference type="Proteomes" id="UP000002439">
    <property type="component" value="Chromosome"/>
</dbReference>
<dbReference type="GO" id="GO:0005886">
    <property type="term" value="C:plasma membrane"/>
    <property type="evidence" value="ECO:0007669"/>
    <property type="project" value="UniProtKB-SubCell"/>
</dbReference>
<dbReference type="GO" id="GO:0005524">
    <property type="term" value="F:ATP binding"/>
    <property type="evidence" value="ECO:0007669"/>
    <property type="project" value="UniProtKB-UniRule"/>
</dbReference>
<dbReference type="GO" id="GO:0046933">
    <property type="term" value="F:proton-transporting ATP synthase activity, rotational mechanism"/>
    <property type="evidence" value="ECO:0007669"/>
    <property type="project" value="UniProtKB-UniRule"/>
</dbReference>
<dbReference type="GO" id="GO:0046961">
    <property type="term" value="F:proton-transporting ATPase activity, rotational mechanism"/>
    <property type="evidence" value="ECO:0000318"/>
    <property type="project" value="GO_Central"/>
</dbReference>
<dbReference type="GO" id="GO:0042777">
    <property type="term" value="P:proton motive force-driven plasma membrane ATP synthesis"/>
    <property type="evidence" value="ECO:0007669"/>
    <property type="project" value="UniProtKB-UniRule"/>
</dbReference>
<dbReference type="GO" id="GO:1902600">
    <property type="term" value="P:proton transmembrane transport"/>
    <property type="evidence" value="ECO:0000318"/>
    <property type="project" value="GO_Central"/>
</dbReference>
<dbReference type="CDD" id="cd18111">
    <property type="entry name" value="ATP-synt_V_A-type_alpha_C"/>
    <property type="match status" value="1"/>
</dbReference>
<dbReference type="CDD" id="cd18119">
    <property type="entry name" value="ATP-synt_V_A-type_alpha_N"/>
    <property type="match status" value="1"/>
</dbReference>
<dbReference type="CDD" id="cd01134">
    <property type="entry name" value="V_A-ATPase_A"/>
    <property type="match status" value="1"/>
</dbReference>
<dbReference type="FunFam" id="2.40.30.20:FF:000002">
    <property type="entry name" value="V-type proton ATPase catalytic subunit A"/>
    <property type="match status" value="1"/>
</dbReference>
<dbReference type="Gene3D" id="2.40.30.20">
    <property type="match status" value="1"/>
</dbReference>
<dbReference type="Gene3D" id="2.40.50.100">
    <property type="match status" value="1"/>
</dbReference>
<dbReference type="Gene3D" id="1.10.1140.10">
    <property type="entry name" value="Bovine Mitochondrial F1-atpase, Atp Synthase Beta Chain, Chain D, domain 3"/>
    <property type="match status" value="1"/>
</dbReference>
<dbReference type="Gene3D" id="3.40.50.300">
    <property type="entry name" value="P-loop containing nucleotide triphosphate hydrolases"/>
    <property type="match status" value="1"/>
</dbReference>
<dbReference type="HAMAP" id="MF_00309">
    <property type="entry name" value="ATP_synth_A_arch"/>
    <property type="match status" value="1"/>
</dbReference>
<dbReference type="InterPro" id="IPR055190">
    <property type="entry name" value="ATP-synt_VA_C"/>
</dbReference>
<dbReference type="InterPro" id="IPR031686">
    <property type="entry name" value="ATP-synth_a_Xtn"/>
</dbReference>
<dbReference type="InterPro" id="IPR023366">
    <property type="entry name" value="ATP_synth_asu-like_sf"/>
</dbReference>
<dbReference type="InterPro" id="IPR004100">
    <property type="entry name" value="ATPase_F1/V1/A1_a/bsu_N"/>
</dbReference>
<dbReference type="InterPro" id="IPR036121">
    <property type="entry name" value="ATPase_F1/V1/A1_a/bsu_N_sf"/>
</dbReference>
<dbReference type="InterPro" id="IPR000194">
    <property type="entry name" value="ATPase_F1/V1/A1_a/bsu_nucl-bd"/>
</dbReference>
<dbReference type="InterPro" id="IPR024034">
    <property type="entry name" value="ATPase_F1/V1_b/a_C"/>
</dbReference>
<dbReference type="InterPro" id="IPR027417">
    <property type="entry name" value="P-loop_NTPase"/>
</dbReference>
<dbReference type="InterPro" id="IPR022878">
    <property type="entry name" value="V-ATPase_asu"/>
</dbReference>
<dbReference type="NCBIfam" id="NF003220">
    <property type="entry name" value="PRK04192.1"/>
    <property type="match status" value="1"/>
</dbReference>
<dbReference type="PANTHER" id="PTHR43607:SF1">
    <property type="entry name" value="H(+)-TRANSPORTING TWO-SECTOR ATPASE"/>
    <property type="match status" value="1"/>
</dbReference>
<dbReference type="PANTHER" id="PTHR43607">
    <property type="entry name" value="V-TYPE PROTON ATPASE CATALYTIC SUBUNIT A"/>
    <property type="match status" value="1"/>
</dbReference>
<dbReference type="Pfam" id="PF00006">
    <property type="entry name" value="ATP-synt_ab"/>
    <property type="match status" value="1"/>
</dbReference>
<dbReference type="Pfam" id="PF02874">
    <property type="entry name" value="ATP-synt_ab_N"/>
    <property type="match status" value="1"/>
</dbReference>
<dbReference type="Pfam" id="PF16886">
    <property type="entry name" value="ATP-synt_ab_Xtn"/>
    <property type="match status" value="1"/>
</dbReference>
<dbReference type="Pfam" id="PF22919">
    <property type="entry name" value="ATP-synt_VA_C"/>
    <property type="match status" value="1"/>
</dbReference>
<dbReference type="SUPFAM" id="SSF47917">
    <property type="entry name" value="C-terminal domain of alpha and beta subunits of F1 ATP synthase"/>
    <property type="match status" value="1"/>
</dbReference>
<dbReference type="SUPFAM" id="SSF50615">
    <property type="entry name" value="N-terminal domain of alpha and beta subunits of F1 ATP synthase"/>
    <property type="match status" value="1"/>
</dbReference>
<dbReference type="SUPFAM" id="SSF52540">
    <property type="entry name" value="P-loop containing nucleoside triphosphate hydrolases"/>
    <property type="match status" value="1"/>
</dbReference>
<comment type="function">
    <text>Produces ATP from ADP in the presence of a proton gradient across the membrane. The archaeal alpha chain is a catalytic subunit.</text>
</comment>
<comment type="function">
    <text evidence="1">Component of the A-type ATP synthase that produces ATP from ADP in the presence of a proton gradient across the membrane. The A chain is the catalytic subunit.</text>
</comment>
<comment type="catalytic activity">
    <reaction evidence="1">
        <text>ATP + H2O + 4 H(+)(in) = ADP + phosphate + 5 H(+)(out)</text>
        <dbReference type="Rhea" id="RHEA:57720"/>
        <dbReference type="ChEBI" id="CHEBI:15377"/>
        <dbReference type="ChEBI" id="CHEBI:15378"/>
        <dbReference type="ChEBI" id="CHEBI:30616"/>
        <dbReference type="ChEBI" id="CHEBI:43474"/>
        <dbReference type="ChEBI" id="CHEBI:456216"/>
        <dbReference type="EC" id="7.1.2.2"/>
    </reaction>
</comment>
<comment type="subunit">
    <text evidence="1">Has multiple subunits with at least A(3), B(3), C, D, E, F, H, I and proteolipid K(x).</text>
</comment>
<comment type="subcellular location">
    <subcellularLocation>
        <location evidence="1">Cell membrane</location>
        <topology evidence="1">Peripheral membrane protein</topology>
    </subcellularLocation>
</comment>
<comment type="similarity">
    <text evidence="1">Belongs to the ATPase alpha/beta chains family.</text>
</comment>
<feature type="chain" id="PRO_0000144603" description="A-type ATP synthase subunit A">
    <location>
        <begin position="1"/>
        <end position="593"/>
    </location>
</feature>
<feature type="binding site" evidence="1">
    <location>
        <begin position="236"/>
        <end position="243"/>
    </location>
    <ligand>
        <name>ATP</name>
        <dbReference type="ChEBI" id="CHEBI:30616"/>
    </ligand>
</feature>
<protein>
    <recommendedName>
        <fullName evidence="1">A-type ATP synthase subunit A</fullName>
        <ecNumber evidence="1">7.1.2.2</ecNumber>
    </recommendedName>
</protein>
<gene>
    <name evidence="1" type="primary">atpA</name>
    <name type="ordered locus">PAE0663</name>
</gene>
<keyword id="KW-0066">ATP synthesis</keyword>
<keyword id="KW-0067">ATP-binding</keyword>
<keyword id="KW-1003">Cell membrane</keyword>
<keyword id="KW-0375">Hydrogen ion transport</keyword>
<keyword id="KW-0406">Ion transport</keyword>
<keyword id="KW-0472">Membrane</keyword>
<keyword id="KW-0547">Nucleotide-binding</keyword>
<keyword id="KW-1185">Reference proteome</keyword>
<keyword id="KW-1278">Translocase</keyword>
<keyword id="KW-0813">Transport</keyword>
<organism>
    <name type="scientific">Pyrobaculum aerophilum (strain ATCC 51768 / DSM 7523 / JCM 9630 / CIP 104966 / NBRC 100827 / IM2)</name>
    <dbReference type="NCBI Taxonomy" id="178306"/>
    <lineage>
        <taxon>Archaea</taxon>
        <taxon>Thermoproteota</taxon>
        <taxon>Thermoprotei</taxon>
        <taxon>Thermoproteales</taxon>
        <taxon>Thermoproteaceae</taxon>
        <taxon>Pyrobaculum</taxon>
    </lineage>
</organism>
<proteinExistence type="inferred from homology"/>
<evidence type="ECO:0000255" key="1">
    <source>
        <dbReference type="HAMAP-Rule" id="MF_00309"/>
    </source>
</evidence>
<name>AATA_PYRAE</name>
<accession>Q8ZYR1</accession>
<sequence>MSGKIEYISGPVVKAELPGARLYELVFVGEIKLFGEVVRIQGEKAFIQVYEDTTGLKPGEPVERTGEPLSAWLGPTIIGKIYDGVQRPLRNIEEISKNPFIARGIGYDKAPPLDLKAEFDFKPAVKPGEEVYPGDVLGSVKETEPMTHYILYPPLPEHAPGVVEWIADGKYKVDDVIARVKTKRGVVEVKMWHKWPVRRPRPFKEKLPPVEPLITGVRTVDTMFPIAKGGTAAVPGPFGSGKTVMIRTLSMFAQSRFIIPVLCGERGNEAADALQGLLKLKDPSTGRPLLERTTIIVNTSNMPVAAREASVYMGTTLGEYFRDQGYDVLVLADSTSRWAEAMREVALRIGEMPSEEGYPAYLPTRLAEFYERAGRVVLYGSKERVGSLTIAASVSPPGGDFTEPVTSNTLRFIGAFWPLSPRLAYSRHYPAIDWLVAFSRYVDTVEVWWSKNVSPEWRRIRDALQSILVKEAELQEIVRILGTEALSEYEKHILNVAFMIREGFLKQDAYNPVDTPSAPIKQFLLMKAIYTYYEEGLKAIESGVPASVLRELETVKRLPRLRMEVTNDVAKEELTKFIESLVAEIRATTNRRG</sequence>